<organism>
    <name type="scientific">Listeria monocytogenes serotype 4a (strain HCC23)</name>
    <dbReference type="NCBI Taxonomy" id="552536"/>
    <lineage>
        <taxon>Bacteria</taxon>
        <taxon>Bacillati</taxon>
        <taxon>Bacillota</taxon>
        <taxon>Bacilli</taxon>
        <taxon>Bacillales</taxon>
        <taxon>Listeriaceae</taxon>
        <taxon>Listeria</taxon>
    </lineage>
</organism>
<protein>
    <recommendedName>
        <fullName evidence="1">Ribonuclease Z</fullName>
        <shortName evidence="1">RNase Z</shortName>
        <ecNumber evidence="1">3.1.26.11</ecNumber>
    </recommendedName>
    <alternativeName>
        <fullName evidence="1">tRNA 3 endonuclease</fullName>
    </alternativeName>
    <alternativeName>
        <fullName evidence="1">tRNase Z</fullName>
    </alternativeName>
</protein>
<accession>B8DBV5</accession>
<comment type="function">
    <text evidence="1">Zinc phosphodiesterase, which displays some tRNA 3'-processing endonuclease activity. Probably involved in tRNA maturation, by removing a 3'-trailer from precursor tRNA.</text>
</comment>
<comment type="catalytic activity">
    <reaction evidence="1">
        <text>Endonucleolytic cleavage of RNA, removing extra 3' nucleotides from tRNA precursor, generating 3' termini of tRNAs. A 3'-hydroxy group is left at the tRNA terminus and a 5'-phosphoryl group is left at the trailer molecule.</text>
        <dbReference type="EC" id="3.1.26.11"/>
    </reaction>
</comment>
<comment type="cofactor">
    <cofactor evidence="1">
        <name>Zn(2+)</name>
        <dbReference type="ChEBI" id="CHEBI:29105"/>
    </cofactor>
    <text evidence="1">Binds 2 Zn(2+) ions.</text>
</comment>
<comment type="subunit">
    <text evidence="1">Homodimer.</text>
</comment>
<comment type="similarity">
    <text evidence="1">Belongs to the RNase Z family.</text>
</comment>
<name>RNZ_LISMH</name>
<sequence>MELVFLGTGAGVPSRGRNVTSIALSMLNERNAIWLFDCGEATQHQIMRSQIKLSKLEKIFITHLHGDHIFGLPGLLSSRSFQGGESDLTIYGPVGITEYVETSLRLSGTRLTYKIIFNEIEPGLIFEDKMFSITVDELDHGLRSFGYRIVEKDKPGALNADKLIEDGVEPGPIFQKIKKGETVTLADGSVINGKDYIDEPQKGKIISIFGDTKATASELELALNADVLVHEATFEGDKEKLAGEYMHSTTLQAASLAKKANVKKLILTHISSRYDRDASKELLIEAQSVFENTEIAYDLAVFPIGE</sequence>
<gene>
    <name evidence="1" type="primary">rnz</name>
    <name type="ordered locus">LMHCC_0584</name>
</gene>
<reference key="1">
    <citation type="journal article" date="2011" name="J. Bacteriol.">
        <title>Genome sequence of lineage III Listeria monocytogenes strain HCC23.</title>
        <authorList>
            <person name="Steele C.L."/>
            <person name="Donaldson J.R."/>
            <person name="Paul D."/>
            <person name="Banes M.M."/>
            <person name="Arick T."/>
            <person name="Bridges S.M."/>
            <person name="Lawrence M.L."/>
        </authorList>
    </citation>
    <scope>NUCLEOTIDE SEQUENCE [LARGE SCALE GENOMIC DNA]</scope>
    <source>
        <strain>HCC23</strain>
    </source>
</reference>
<feature type="chain" id="PRO_1000187969" description="Ribonuclease Z">
    <location>
        <begin position="1"/>
        <end position="306"/>
    </location>
</feature>
<feature type="active site" description="Proton acceptor" evidence="1">
    <location>
        <position position="67"/>
    </location>
</feature>
<feature type="binding site" evidence="1">
    <location>
        <position position="63"/>
    </location>
    <ligand>
        <name>Zn(2+)</name>
        <dbReference type="ChEBI" id="CHEBI:29105"/>
        <label>1</label>
        <note>catalytic</note>
    </ligand>
</feature>
<feature type="binding site" evidence="1">
    <location>
        <position position="65"/>
    </location>
    <ligand>
        <name>Zn(2+)</name>
        <dbReference type="ChEBI" id="CHEBI:29105"/>
        <label>1</label>
        <note>catalytic</note>
    </ligand>
</feature>
<feature type="binding site" evidence="1">
    <location>
        <position position="67"/>
    </location>
    <ligand>
        <name>Zn(2+)</name>
        <dbReference type="ChEBI" id="CHEBI:29105"/>
        <label>2</label>
        <note>catalytic</note>
    </ligand>
</feature>
<feature type="binding site" evidence="1">
    <location>
        <position position="68"/>
    </location>
    <ligand>
        <name>Zn(2+)</name>
        <dbReference type="ChEBI" id="CHEBI:29105"/>
        <label>2</label>
        <note>catalytic</note>
    </ligand>
</feature>
<feature type="binding site" evidence="1">
    <location>
        <position position="140"/>
    </location>
    <ligand>
        <name>Zn(2+)</name>
        <dbReference type="ChEBI" id="CHEBI:29105"/>
        <label>1</label>
        <note>catalytic</note>
    </ligand>
</feature>
<feature type="binding site" evidence="1">
    <location>
        <position position="211"/>
    </location>
    <ligand>
        <name>Zn(2+)</name>
        <dbReference type="ChEBI" id="CHEBI:29105"/>
        <label>1</label>
        <note>catalytic</note>
    </ligand>
</feature>
<feature type="binding site" evidence="1">
    <location>
        <position position="211"/>
    </location>
    <ligand>
        <name>Zn(2+)</name>
        <dbReference type="ChEBI" id="CHEBI:29105"/>
        <label>2</label>
        <note>catalytic</note>
    </ligand>
</feature>
<feature type="binding site" evidence="1">
    <location>
        <position position="269"/>
    </location>
    <ligand>
        <name>Zn(2+)</name>
        <dbReference type="ChEBI" id="CHEBI:29105"/>
        <label>2</label>
        <note>catalytic</note>
    </ligand>
</feature>
<evidence type="ECO:0000255" key="1">
    <source>
        <dbReference type="HAMAP-Rule" id="MF_01818"/>
    </source>
</evidence>
<proteinExistence type="inferred from homology"/>
<keyword id="KW-0255">Endonuclease</keyword>
<keyword id="KW-0378">Hydrolase</keyword>
<keyword id="KW-0479">Metal-binding</keyword>
<keyword id="KW-0540">Nuclease</keyword>
<keyword id="KW-0819">tRNA processing</keyword>
<keyword id="KW-0862">Zinc</keyword>
<dbReference type="EC" id="3.1.26.11" evidence="1"/>
<dbReference type="EMBL" id="CP001175">
    <property type="protein sequence ID" value="ACK38941.1"/>
    <property type="molecule type" value="Genomic_DNA"/>
</dbReference>
<dbReference type="RefSeq" id="WP_012581040.1">
    <property type="nucleotide sequence ID" value="NC_011660.1"/>
</dbReference>
<dbReference type="SMR" id="B8DBV5"/>
<dbReference type="KEGG" id="lmh:LMHCC_0584"/>
<dbReference type="HOGENOM" id="CLU_031317_2_0_9"/>
<dbReference type="GO" id="GO:0042781">
    <property type="term" value="F:3'-tRNA processing endoribonuclease activity"/>
    <property type="evidence" value="ECO:0007669"/>
    <property type="project" value="UniProtKB-UniRule"/>
</dbReference>
<dbReference type="GO" id="GO:0008270">
    <property type="term" value="F:zinc ion binding"/>
    <property type="evidence" value="ECO:0007669"/>
    <property type="project" value="UniProtKB-UniRule"/>
</dbReference>
<dbReference type="CDD" id="cd07717">
    <property type="entry name" value="RNaseZ_ZiPD-like_MBL-fold"/>
    <property type="match status" value="1"/>
</dbReference>
<dbReference type="FunFam" id="3.60.15.10:FF:000002">
    <property type="entry name" value="Ribonuclease Z"/>
    <property type="match status" value="1"/>
</dbReference>
<dbReference type="Gene3D" id="3.60.15.10">
    <property type="entry name" value="Ribonuclease Z/Hydroxyacylglutathione hydrolase-like"/>
    <property type="match status" value="1"/>
</dbReference>
<dbReference type="HAMAP" id="MF_01818">
    <property type="entry name" value="RNase_Z_BN"/>
    <property type="match status" value="1"/>
</dbReference>
<dbReference type="InterPro" id="IPR001279">
    <property type="entry name" value="Metallo-B-lactamas"/>
</dbReference>
<dbReference type="InterPro" id="IPR036866">
    <property type="entry name" value="RibonucZ/Hydroxyglut_hydro"/>
</dbReference>
<dbReference type="InterPro" id="IPR013471">
    <property type="entry name" value="RNase_Z/BN"/>
</dbReference>
<dbReference type="NCBIfam" id="NF000800">
    <property type="entry name" value="PRK00055.1-1"/>
    <property type="match status" value="1"/>
</dbReference>
<dbReference type="NCBIfam" id="NF000801">
    <property type="entry name" value="PRK00055.1-3"/>
    <property type="match status" value="1"/>
</dbReference>
<dbReference type="NCBIfam" id="TIGR02651">
    <property type="entry name" value="RNase_Z"/>
    <property type="match status" value="1"/>
</dbReference>
<dbReference type="PANTHER" id="PTHR46018">
    <property type="entry name" value="ZINC PHOSPHODIESTERASE ELAC PROTEIN 1"/>
    <property type="match status" value="1"/>
</dbReference>
<dbReference type="PANTHER" id="PTHR46018:SF2">
    <property type="entry name" value="ZINC PHOSPHODIESTERASE ELAC PROTEIN 1"/>
    <property type="match status" value="1"/>
</dbReference>
<dbReference type="Pfam" id="PF00753">
    <property type="entry name" value="Lactamase_B"/>
    <property type="match status" value="1"/>
</dbReference>
<dbReference type="SUPFAM" id="SSF56281">
    <property type="entry name" value="Metallo-hydrolase/oxidoreductase"/>
    <property type="match status" value="1"/>
</dbReference>